<reference key="1">
    <citation type="journal article" date="2006" name="Gene">
        <title>Genetic localization and heterologous expression of validamycin biosynthetic gene cluster isolated from Streptomyces hygroscopicus var. limoneus KCCM 11405 (IFO 12704).</title>
        <authorList>
            <person name="Singh D."/>
            <person name="Seo M.J."/>
            <person name="Kwon H.J."/>
            <person name="Rajkarnikar A."/>
            <person name="Kim K.R."/>
            <person name="Kim S.O."/>
            <person name="Suh J.W."/>
        </authorList>
    </citation>
    <scope>NUCLEOTIDE SEQUENCE [GENOMIC DNA]</scope>
    <scope>FUNCTION</scope>
    <source>
        <strain evidence="5">ATCC 21432 / NBRC 12704 / KCTC 1717 / KCCM 11405</strain>
    </source>
</reference>
<gene>
    <name evidence="3" type="primary">vldK</name>
</gene>
<proteinExistence type="inferred from homology"/>
<feature type="chain" id="PRO_0000442848" description="Validoxylamine A glucosyltransferase">
    <location>
        <begin position="1"/>
        <end position="453"/>
    </location>
</feature>
<accession>Q15JF5</accession>
<sequence>MEGVDIPGRPSPWRVCVTRPQVHPINAKVAPMPGATSHVPLLSVVIPTYNRDALLDRTLGTLARQTTAPEDFEVVVSDDGSTDTTRDVVRSYEDRLRIKYVFQEDLGYRVASARNGGARLASAPLLAFLDTGVLAGPQYVQSVLAAHAGPAPAKVVLGCCYGYDPRNPHPELHSLVEEFPPEEAVRRVGDAPWFQDMRLPEFTAVDFDLSRMHMPWLWFWTLNVSLPAADFWRVGGFDEDFTGWGGEDIELGYRLHAHGIPMTVSRESWGIEAPHERTHEANVSSLMLNCDRFVRKHPSLLPELFWAVTNRGIFGSVETERLRFEEWASQARGQQVLDEIAIGLDTLPPSQHTQRVAVFGSGTEGLPTAPRQNVELFLCDYDEGVLARQESRDDGAVSTWHLSGLRTPWPDQHFDLVIITSRMDGPRQAWGEAFTKEAHRIASSVVEPSLSGD</sequence>
<name>VLDK_STRHL</name>
<evidence type="ECO:0000250" key="1">
    <source>
        <dbReference type="UniProtKB" id="H2K893"/>
    </source>
</evidence>
<evidence type="ECO:0000269" key="2">
    <source>
    </source>
</evidence>
<evidence type="ECO:0000303" key="3">
    <source>
    </source>
</evidence>
<evidence type="ECO:0000305" key="4"/>
<evidence type="ECO:0000312" key="5">
    <source>
        <dbReference type="EMBL" id="ABC67275.1"/>
    </source>
</evidence>
<dbReference type="EC" id="2.4.1.338" evidence="1"/>
<dbReference type="EMBL" id="DQ223652">
    <property type="protein sequence ID" value="ABC67275.1"/>
    <property type="molecule type" value="Genomic_DNA"/>
</dbReference>
<dbReference type="SMR" id="Q15JF5"/>
<dbReference type="CAZy" id="GT2">
    <property type="family name" value="Glycosyltransferase Family 2"/>
</dbReference>
<dbReference type="GO" id="GO:0046872">
    <property type="term" value="F:metal ion binding"/>
    <property type="evidence" value="ECO:0007669"/>
    <property type="project" value="UniProtKB-KW"/>
</dbReference>
<dbReference type="GO" id="GO:0016740">
    <property type="term" value="F:transferase activity"/>
    <property type="evidence" value="ECO:0007669"/>
    <property type="project" value="UniProtKB-KW"/>
</dbReference>
<dbReference type="GO" id="GO:0017000">
    <property type="term" value="P:antibiotic biosynthetic process"/>
    <property type="evidence" value="ECO:0007669"/>
    <property type="project" value="UniProtKB-KW"/>
</dbReference>
<dbReference type="Gene3D" id="3.90.550.10">
    <property type="entry name" value="Spore Coat Polysaccharide Biosynthesis Protein SpsA, Chain A"/>
    <property type="match status" value="1"/>
</dbReference>
<dbReference type="InterPro" id="IPR027791">
    <property type="entry name" value="Galactosyl_T_C"/>
</dbReference>
<dbReference type="InterPro" id="IPR001173">
    <property type="entry name" value="Glyco_trans_2-like"/>
</dbReference>
<dbReference type="InterPro" id="IPR050834">
    <property type="entry name" value="Glycosyltransf_2"/>
</dbReference>
<dbReference type="InterPro" id="IPR029044">
    <property type="entry name" value="Nucleotide-diphossugar_trans"/>
</dbReference>
<dbReference type="PANTHER" id="PTHR43685">
    <property type="entry name" value="GLYCOSYLTRANSFERASE"/>
    <property type="match status" value="1"/>
</dbReference>
<dbReference type="PANTHER" id="PTHR43685:SF3">
    <property type="entry name" value="SLR2126 PROTEIN"/>
    <property type="match status" value="1"/>
</dbReference>
<dbReference type="Pfam" id="PF02709">
    <property type="entry name" value="Glyco_transf_7C"/>
    <property type="match status" value="1"/>
</dbReference>
<dbReference type="Pfam" id="PF00535">
    <property type="entry name" value="Glycos_transf_2"/>
    <property type="match status" value="1"/>
</dbReference>
<dbReference type="SUPFAM" id="SSF53448">
    <property type="entry name" value="Nucleotide-diphospho-sugar transferases"/>
    <property type="match status" value="1"/>
</dbReference>
<comment type="function">
    <text evidence="1 2">Involved in the biosynthesis of the antifungal agent validamycin A (PubMed:16725283). Catalyzes the final attachment of glucose from UDP-alpha-D-glucose to validoxylamine A to yield validamycin A (By similarity).</text>
</comment>
<comment type="catalytic activity">
    <reaction evidence="1">
        <text>validoxylamine A + UDP-alpha-D-glucose = validamycin A + UDP + H(+)</text>
        <dbReference type="Rhea" id="RHEA:49388"/>
        <dbReference type="ChEBI" id="CHEBI:15378"/>
        <dbReference type="ChEBI" id="CHEBI:58223"/>
        <dbReference type="ChEBI" id="CHEBI:58885"/>
        <dbReference type="ChEBI" id="CHEBI:90869"/>
        <dbReference type="ChEBI" id="CHEBI:111505"/>
        <dbReference type="EC" id="2.4.1.338"/>
    </reaction>
</comment>
<comment type="cofactor">
    <cofactor evidence="1">
        <name>Mn(2+)</name>
        <dbReference type="ChEBI" id="CHEBI:29035"/>
    </cofactor>
</comment>
<comment type="domain">
    <text evidence="1">Instead of having the common DXD motif at the position 130-132, it contains a DTG sequence, which may provide greater metal ion binding flexibility.</text>
</comment>
<comment type="similarity">
    <text evidence="4">Belongs to the glycosyltransferase 2 family.</text>
</comment>
<organism>
    <name type="scientific">Streptomyces hygroscopicus subsp. limoneus</name>
    <dbReference type="NCBI Taxonomy" id="264445"/>
    <lineage>
        <taxon>Bacteria</taxon>
        <taxon>Bacillati</taxon>
        <taxon>Actinomycetota</taxon>
        <taxon>Actinomycetes</taxon>
        <taxon>Kitasatosporales</taxon>
        <taxon>Streptomycetaceae</taxon>
        <taxon>Streptomyces</taxon>
        <taxon>Streptomyces violaceusniger group</taxon>
    </lineage>
</organism>
<protein>
    <recommendedName>
        <fullName evidence="3">Validoxylamine A glucosyltransferase</fullName>
        <ecNumber evidence="1">2.4.1.338</ecNumber>
    </recommendedName>
</protein>
<keyword id="KW-0045">Antibiotic biosynthesis</keyword>
<keyword id="KW-0464">Manganese</keyword>
<keyword id="KW-0479">Metal-binding</keyword>
<keyword id="KW-0808">Transferase</keyword>